<keyword id="KW-0025">Alternative splicing</keyword>
<keyword id="KW-1003">Cell membrane</keyword>
<keyword id="KW-0175">Coiled coil</keyword>
<keyword id="KW-0963">Cytoplasm</keyword>
<keyword id="KW-0968">Cytoplasmic vesicle</keyword>
<keyword id="KW-0967">Endosome</keyword>
<keyword id="KW-0472">Membrane</keyword>
<keyword id="KW-1185">Reference proteome</keyword>
<keyword id="KW-0728">SH3 domain</keyword>
<gene>
    <name evidence="11" type="primary">SH3P2</name>
    <name evidence="13" type="ordered locus">At4g34660</name>
    <name evidence="14" type="ORF">T4L20.240</name>
</gene>
<reference key="1">
    <citation type="journal article" date="2001" name="Plant Cell">
        <title>Role of SH3 domain-containing proteins in clathrin-mediated vesicle trafficking in Arabidopsis.</title>
        <authorList>
            <person name="Lam B.C.-H."/>
            <person name="Sage T.L."/>
            <person name="Bianchi F."/>
            <person name="Blumwald E."/>
        </authorList>
    </citation>
    <scope>NUCLEOTIDE SEQUENCE [MRNA]</scope>
    <scope>TISSUE SPECIFICITY</scope>
    <scope>SUBCELLULAR LOCATION</scope>
</reference>
<reference key="2">
    <citation type="journal article" date="1999" name="Nature">
        <title>Sequence and analysis of chromosome 4 of the plant Arabidopsis thaliana.</title>
        <authorList>
            <person name="Mayer K.F.X."/>
            <person name="Schueller C."/>
            <person name="Wambutt R."/>
            <person name="Murphy G."/>
            <person name="Volckaert G."/>
            <person name="Pohl T."/>
            <person name="Duesterhoeft A."/>
            <person name="Stiekema W."/>
            <person name="Entian K.-D."/>
            <person name="Terryn N."/>
            <person name="Harris B."/>
            <person name="Ansorge W."/>
            <person name="Brandt P."/>
            <person name="Grivell L.A."/>
            <person name="Rieger M."/>
            <person name="Weichselgartner M."/>
            <person name="de Simone V."/>
            <person name="Obermaier B."/>
            <person name="Mache R."/>
            <person name="Mueller M."/>
            <person name="Kreis M."/>
            <person name="Delseny M."/>
            <person name="Puigdomenech P."/>
            <person name="Watson M."/>
            <person name="Schmidtheini T."/>
            <person name="Reichert B."/>
            <person name="Portetelle D."/>
            <person name="Perez-Alonso M."/>
            <person name="Boutry M."/>
            <person name="Bancroft I."/>
            <person name="Vos P."/>
            <person name="Hoheisel J."/>
            <person name="Zimmermann W."/>
            <person name="Wedler H."/>
            <person name="Ridley P."/>
            <person name="Langham S.-A."/>
            <person name="McCullagh B."/>
            <person name="Bilham L."/>
            <person name="Robben J."/>
            <person name="van der Schueren J."/>
            <person name="Grymonprez B."/>
            <person name="Chuang Y.-J."/>
            <person name="Vandenbussche F."/>
            <person name="Braeken M."/>
            <person name="Weltjens I."/>
            <person name="Voet M."/>
            <person name="Bastiaens I."/>
            <person name="Aert R."/>
            <person name="Defoor E."/>
            <person name="Weitzenegger T."/>
            <person name="Bothe G."/>
            <person name="Ramsperger U."/>
            <person name="Hilbert H."/>
            <person name="Braun M."/>
            <person name="Holzer E."/>
            <person name="Brandt A."/>
            <person name="Peters S."/>
            <person name="van Staveren M."/>
            <person name="Dirkse W."/>
            <person name="Mooijman P."/>
            <person name="Klein Lankhorst R."/>
            <person name="Rose M."/>
            <person name="Hauf J."/>
            <person name="Koetter P."/>
            <person name="Berneiser S."/>
            <person name="Hempel S."/>
            <person name="Feldpausch M."/>
            <person name="Lamberth S."/>
            <person name="Van den Daele H."/>
            <person name="De Keyser A."/>
            <person name="Buysshaert C."/>
            <person name="Gielen J."/>
            <person name="Villarroel R."/>
            <person name="De Clercq R."/>
            <person name="van Montagu M."/>
            <person name="Rogers J."/>
            <person name="Cronin A."/>
            <person name="Quail M.A."/>
            <person name="Bray-Allen S."/>
            <person name="Clark L."/>
            <person name="Doggett J."/>
            <person name="Hall S."/>
            <person name="Kay M."/>
            <person name="Lennard N."/>
            <person name="McLay K."/>
            <person name="Mayes R."/>
            <person name="Pettett A."/>
            <person name="Rajandream M.A."/>
            <person name="Lyne M."/>
            <person name="Benes V."/>
            <person name="Rechmann S."/>
            <person name="Borkova D."/>
            <person name="Bloecker H."/>
            <person name="Scharfe M."/>
            <person name="Grimm M."/>
            <person name="Loehnert T.-H."/>
            <person name="Dose S."/>
            <person name="de Haan M."/>
            <person name="Maarse A.C."/>
            <person name="Schaefer M."/>
            <person name="Mueller-Auer S."/>
            <person name="Gabel C."/>
            <person name="Fuchs M."/>
            <person name="Fartmann B."/>
            <person name="Granderath K."/>
            <person name="Dauner D."/>
            <person name="Herzl A."/>
            <person name="Neumann S."/>
            <person name="Argiriou A."/>
            <person name="Vitale D."/>
            <person name="Liguori R."/>
            <person name="Piravandi E."/>
            <person name="Massenet O."/>
            <person name="Quigley F."/>
            <person name="Clabauld G."/>
            <person name="Muendlein A."/>
            <person name="Felber R."/>
            <person name="Schnabl S."/>
            <person name="Hiller R."/>
            <person name="Schmidt W."/>
            <person name="Lecharny A."/>
            <person name="Aubourg S."/>
            <person name="Chefdor F."/>
            <person name="Cooke R."/>
            <person name="Berger C."/>
            <person name="Monfort A."/>
            <person name="Casacuberta E."/>
            <person name="Gibbons T."/>
            <person name="Weber N."/>
            <person name="Vandenbol M."/>
            <person name="Bargues M."/>
            <person name="Terol J."/>
            <person name="Torres A."/>
            <person name="Perez-Perez A."/>
            <person name="Purnelle B."/>
            <person name="Bent E."/>
            <person name="Johnson S."/>
            <person name="Tacon D."/>
            <person name="Jesse T."/>
            <person name="Heijnen L."/>
            <person name="Schwarz S."/>
            <person name="Scholler P."/>
            <person name="Heber S."/>
            <person name="Francs P."/>
            <person name="Bielke C."/>
            <person name="Frishman D."/>
            <person name="Haase D."/>
            <person name="Lemcke K."/>
            <person name="Mewes H.-W."/>
            <person name="Stocker S."/>
            <person name="Zaccaria P."/>
            <person name="Bevan M."/>
            <person name="Wilson R.K."/>
            <person name="de la Bastide M."/>
            <person name="Habermann K."/>
            <person name="Parnell L."/>
            <person name="Dedhia N."/>
            <person name="Gnoj L."/>
            <person name="Schutz K."/>
            <person name="Huang E."/>
            <person name="Spiegel L."/>
            <person name="Sekhon M."/>
            <person name="Murray J."/>
            <person name="Sheet P."/>
            <person name="Cordes M."/>
            <person name="Abu-Threideh J."/>
            <person name="Stoneking T."/>
            <person name="Kalicki J."/>
            <person name="Graves T."/>
            <person name="Harmon G."/>
            <person name="Edwards J."/>
            <person name="Latreille P."/>
            <person name="Courtney L."/>
            <person name="Cloud J."/>
            <person name="Abbott A."/>
            <person name="Scott K."/>
            <person name="Johnson D."/>
            <person name="Minx P."/>
            <person name="Bentley D."/>
            <person name="Fulton B."/>
            <person name="Miller N."/>
            <person name="Greco T."/>
            <person name="Kemp K."/>
            <person name="Kramer J."/>
            <person name="Fulton L."/>
            <person name="Mardis E."/>
            <person name="Dante M."/>
            <person name="Pepin K."/>
            <person name="Hillier L.W."/>
            <person name="Nelson J."/>
            <person name="Spieth J."/>
            <person name="Ryan E."/>
            <person name="Andrews S."/>
            <person name="Geisel C."/>
            <person name="Layman D."/>
            <person name="Du H."/>
            <person name="Ali J."/>
            <person name="Berghoff A."/>
            <person name="Jones K."/>
            <person name="Drone K."/>
            <person name="Cotton M."/>
            <person name="Joshu C."/>
            <person name="Antonoiu B."/>
            <person name="Zidanic M."/>
            <person name="Strong C."/>
            <person name="Sun H."/>
            <person name="Lamar B."/>
            <person name="Yordan C."/>
            <person name="Ma P."/>
            <person name="Zhong J."/>
            <person name="Preston R."/>
            <person name="Vil D."/>
            <person name="Shekher M."/>
            <person name="Matero A."/>
            <person name="Shah R."/>
            <person name="Swaby I.K."/>
            <person name="O'Shaughnessy A."/>
            <person name="Rodriguez M."/>
            <person name="Hoffman J."/>
            <person name="Till S."/>
            <person name="Granat S."/>
            <person name="Shohdy N."/>
            <person name="Hasegawa A."/>
            <person name="Hameed A."/>
            <person name="Lodhi M."/>
            <person name="Johnson A."/>
            <person name="Chen E."/>
            <person name="Marra M.A."/>
            <person name="Martienssen R."/>
            <person name="McCombie W.R."/>
        </authorList>
    </citation>
    <scope>NUCLEOTIDE SEQUENCE [LARGE SCALE GENOMIC DNA]</scope>
    <source>
        <strain>cv. Columbia</strain>
    </source>
</reference>
<reference key="3">
    <citation type="journal article" date="2017" name="Plant J.">
        <title>Araport11: a complete reannotation of the Arabidopsis thaliana reference genome.</title>
        <authorList>
            <person name="Cheng C.Y."/>
            <person name="Krishnakumar V."/>
            <person name="Chan A.P."/>
            <person name="Thibaud-Nissen F."/>
            <person name="Schobel S."/>
            <person name="Town C.D."/>
        </authorList>
    </citation>
    <scope>GENOME REANNOTATION</scope>
    <source>
        <strain>cv. Columbia</strain>
    </source>
</reference>
<reference key="4">
    <citation type="journal article" date="2003" name="Science">
        <title>Empirical analysis of transcriptional activity in the Arabidopsis genome.</title>
        <authorList>
            <person name="Yamada K."/>
            <person name="Lim J."/>
            <person name="Dale J.M."/>
            <person name="Chen H."/>
            <person name="Shinn P."/>
            <person name="Palm C.J."/>
            <person name="Southwick A.M."/>
            <person name="Wu H.C."/>
            <person name="Kim C.J."/>
            <person name="Nguyen M."/>
            <person name="Pham P.K."/>
            <person name="Cheuk R.F."/>
            <person name="Karlin-Newmann G."/>
            <person name="Liu S.X."/>
            <person name="Lam B."/>
            <person name="Sakano H."/>
            <person name="Wu T."/>
            <person name="Yu G."/>
            <person name="Miranda M."/>
            <person name="Quach H.L."/>
            <person name="Tripp M."/>
            <person name="Chang C.H."/>
            <person name="Lee J.M."/>
            <person name="Toriumi M.J."/>
            <person name="Chan M.M."/>
            <person name="Tang C.C."/>
            <person name="Onodera C.S."/>
            <person name="Deng J.M."/>
            <person name="Akiyama K."/>
            <person name="Ansari Y."/>
            <person name="Arakawa T."/>
            <person name="Banh J."/>
            <person name="Banno F."/>
            <person name="Bowser L."/>
            <person name="Brooks S.Y."/>
            <person name="Carninci P."/>
            <person name="Chao Q."/>
            <person name="Choy N."/>
            <person name="Enju A."/>
            <person name="Goldsmith A.D."/>
            <person name="Gurjal M."/>
            <person name="Hansen N.F."/>
            <person name="Hayashizaki Y."/>
            <person name="Johnson-Hopson C."/>
            <person name="Hsuan V.W."/>
            <person name="Iida K."/>
            <person name="Karnes M."/>
            <person name="Khan S."/>
            <person name="Koesema E."/>
            <person name="Ishida J."/>
            <person name="Jiang P.X."/>
            <person name="Jones T."/>
            <person name="Kawai J."/>
            <person name="Kamiya A."/>
            <person name="Meyers C."/>
            <person name="Nakajima M."/>
            <person name="Narusaka M."/>
            <person name="Seki M."/>
            <person name="Sakurai T."/>
            <person name="Satou M."/>
            <person name="Tamse R."/>
            <person name="Vaysberg M."/>
            <person name="Wallender E.K."/>
            <person name="Wong C."/>
            <person name="Yamamura Y."/>
            <person name="Yuan S."/>
            <person name="Shinozaki K."/>
            <person name="Davis R.W."/>
            <person name="Theologis A."/>
            <person name="Ecker J.R."/>
        </authorList>
    </citation>
    <scope>NUCLEOTIDE SEQUENCE [LARGE SCALE MRNA]</scope>
    <source>
        <strain>cv. Columbia</strain>
    </source>
</reference>
<reference key="5">
    <citation type="submission" date="2002-03" db="EMBL/GenBank/DDBJ databases">
        <title>Full-length cDNA from Arabidopsis thaliana.</title>
        <authorList>
            <person name="Brover V.V."/>
            <person name="Troukhan M.E."/>
            <person name="Alexandrov N.A."/>
            <person name="Lu Y.-P."/>
            <person name="Flavell R.B."/>
            <person name="Feldmann K.A."/>
        </authorList>
    </citation>
    <scope>NUCLEOTIDE SEQUENCE [LARGE SCALE MRNA]</scope>
</reference>
<reference key="6">
    <citation type="journal article" date="2015" name="Plant Physiol.">
        <title>FYVE1 is essential for vacuole biogenesis and intracellular trafficking in Arabidopsis.</title>
        <authorList>
            <person name="Kolb C."/>
            <person name="Nagel M.K."/>
            <person name="Kalinowska K."/>
            <person name="Hagmann J."/>
            <person name="Ichikawa M."/>
            <person name="Anzenberger F."/>
            <person name="Alkofer A."/>
            <person name="Sato M.H."/>
            <person name="Braun P."/>
            <person name="Isono E."/>
        </authorList>
    </citation>
    <scope>SUBCELLULAR LOCATION</scope>
    <scope>INTERACTION WITH FREE1</scope>
</reference>
<reference key="7">
    <citation type="journal article" date="2015" name="Proc. Natl. Acad. Sci. U.S.A.">
        <title>Dual roles of an Arabidopsis ESCRT component FREE1 in regulating vacuolar protein transport and autophagic degradation.</title>
        <authorList>
            <person name="Gao C."/>
            <person name="Zhuang X."/>
            <person name="Cui Y."/>
            <person name="Fu X."/>
            <person name="He Y."/>
            <person name="Zhao Q."/>
            <person name="Zeng Y."/>
            <person name="Shen J."/>
            <person name="Luo M."/>
            <person name="Jiang L."/>
        </authorList>
    </citation>
    <scope>INTERACTION WITH FREE1</scope>
    <scope>DOMAIN</scope>
    <scope>IDENTIFICATION IN A PI3K COMPLEX</scope>
</reference>
<reference key="8">
    <citation type="journal article" date="2013" name="Plant Cell">
        <title>A BAR-domain protein SH3P2, which binds to phosphatidylinositol 3-phosphate and ATG8, regulates autophagosome formation in Arabidopsis.</title>
        <authorList>
            <person name="Zhuang X."/>
            <person name="Wang H."/>
            <person name="Lam S.K."/>
            <person name="Gao C."/>
            <person name="Wang X."/>
            <person name="Cai Y."/>
            <person name="Jiang L."/>
        </authorList>
    </citation>
    <scope>FUNCTION</scope>
    <scope>SUBCELLULAR LOCATION</scope>
    <scope>SUBUNIT</scope>
    <scope>INTERACTION WITH ATG8E AND ATG8F</scope>
    <scope>IDENTIFICATION IN A PI3K COMPLEX</scope>
</reference>
<reference key="9">
    <citation type="journal article" date="2014" name="Autophagy">
        <title>Autophagosome biogenesis in plants.</title>
        <authorList>
            <person name="Zhuang X."/>
            <person name="Jiang L."/>
        </authorList>
    </citation>
    <scope>FUNCTION</scope>
    <scope>SUBCELLULAR LOCATION</scope>
</reference>
<reference key="10">
    <citation type="journal article" date="2017" name="Plant Cell">
        <title>SH3 domain-containing protein 2 plays a crucial role at the step of membrane tubulation during cell plate formation.</title>
        <authorList>
            <person name="Ahn G."/>
            <person name="Kim H."/>
            <person name="Kim D.H."/>
            <person name="Hanh H."/>
            <person name="Yoon Y."/>
            <person name="Singaram I."/>
            <person name="Wijesinghe K.J."/>
            <person name="Johnson K.A."/>
            <person name="Zhuang X."/>
            <person name="Liang Z."/>
            <person name="Stahelin R.V."/>
            <person name="Jiang L."/>
            <person name="Cho W."/>
            <person name="Kang B.-H."/>
            <person name="Hwang I."/>
        </authorList>
    </citation>
    <scope>FUNCTION</scope>
    <scope>DISRUPTION PHENOTYPE</scope>
    <scope>MUTAGENESIS OF GLN-154; ARG-155; 160-ARG-GLN-161; ARG-172; ARG-173 AND LYS-189</scope>
    <scope>SUBCELLULAR LOCATION</scope>
    <scope>INTERACTION WITH DRP1A AND SH3P3</scope>
    <scope>SUBUNIT</scope>
    <source>
        <strain>cv. Columbia</strain>
        <strain>cv. Wassilewskija-2</strain>
    </source>
</reference>
<accession>Q8VWF1</accession>
<accession>F4JLF5</accession>
<accession>F4JLF6</accession>
<accession>O65689</accession>
<comment type="function">
    <text evidence="6 9 10">Regulator for autophaosome formation and/or maturation (PubMed:24249832, Ref.9). Binds phosphatidylinositol-phosphate; highest affinity for vesicles containing PtdIns(3,4,5)P(3), followed by those containing PtdIns(4,5)P(2) and PtdIns(3,4)P(2), with minimal binding to phosphatidylinositol monophosphates, including PtdIns(3)P (PubMed:24249832, PubMed:28584166). Together with DRP1A, converts the fused vesicles to tubular structures at the cell plate during cytokinesis (PubMed:28584166).</text>
</comment>
<comment type="subunit">
    <text evidence="6 7 8 9">Homodimer (PubMed:24249832, PubMed:28584166). Interacts with FREE1 (PubMed:25624505, PubMed:25699591). Interacts (via SH3 domain) with ATG8E and ATG8F (PubMed:24249832). Component of a phosphoinositide 3-kinase (PI3K) complex containing ATG6, SH3P2 and FREE1 (PubMed:24249832, PubMed:25624505). Binds to SH3P3 and DRP1A (PubMed:28584166). Forms a complex made of SH3P2 and DRP1A and triggers its accumulation at the cell plate (PubMed:28584166).</text>
</comment>
<comment type="subcellular location">
    <subcellularLocation>
        <location evidence="6 8">Cytoplasm</location>
    </subcellularLocation>
    <subcellularLocation>
        <location evidence="5 8">Cytoplasmic vesicle</location>
        <location evidence="5 8">Clathrin-coated vesicle</location>
    </subcellularLocation>
    <subcellularLocation>
        <location evidence="8 9">Cell membrane</location>
    </subcellularLocation>
    <subcellularLocation>
        <location evidence="8 9">Late endosome</location>
    </subcellularLocation>
    <subcellularLocation>
        <location evidence="6 10">Cytoplasmic vesicle</location>
        <location evidence="6 10">Autophagosome membrane</location>
        <topology evidence="10">Peripheral membrane protein</topology>
    </subcellularLocation>
    <text evidence="6 9">Transolcate from the cytosol to the phagophore assembly site/preautophagosome structure upon autophagy induction (PubMed:24249832). Localized at the leading edge of the cell plate in dividing cells, especially in constricted or curved regions (PubMed:28584166). Observed at the plasma membrane and in endosomal compartments in non-dividing cells (PubMed:28584166).</text>
</comment>
<comment type="alternative products">
    <event type="alternative splicing"/>
    <isoform>
        <id>Q8VWF1-1</id>
        <name>1</name>
        <sequence type="displayed"/>
    </isoform>
    <isoform>
        <id>Q8VWF1-2</id>
        <name>2</name>
        <sequence type="described" ref="VSP_057911"/>
    </isoform>
    <isoform>
        <id>Q8VWF1-3</id>
        <name>3</name>
        <sequence type="described" ref="VSP_057912"/>
    </isoform>
</comment>
<comment type="tissue specificity">
    <text evidence="5">Highly expressed in seedlings. Detected in flowers, leaves and stems.</text>
</comment>
<comment type="domain">
    <text evidence="7">The N-terminal BAR domain is required for the interaction with FREE1.</text>
</comment>
<comment type="disruption phenotype">
    <text evidence="9">Delayed germination, but almost normal growth after germination in sh3p2 partial mutants (PubMed:28584166). RNAi plants exhibit cytokinesis-defective phenotypes associated with the aggregation of vesicles at the leading edge of the cell plate and abnormal cytosolic localization of DRP1A in dividing cells (PubMed:28584166).</text>
</comment>
<comment type="miscellaneous">
    <text evidence="6">Knockdown of SH3P2 is developmentally lethal and significantly suppresses autophagosome formation.</text>
</comment>
<comment type="sequence caution" evidence="12">
    <conflict type="erroneous gene model prediction">
        <sequence resource="EMBL-CDS" id="CAA18845"/>
    </conflict>
</comment>
<comment type="sequence caution" evidence="12">
    <conflict type="erroneous gene model prediction">
        <sequence resource="EMBL-CDS" id="CAB80183"/>
    </conflict>
</comment>
<dbReference type="EMBL" id="AF367774">
    <property type="protein sequence ID" value="AAL32439.1"/>
    <property type="molecule type" value="mRNA"/>
</dbReference>
<dbReference type="EMBL" id="AL023094">
    <property type="protein sequence ID" value="CAA18845.1"/>
    <property type="status" value="ALT_SEQ"/>
    <property type="molecule type" value="Genomic_DNA"/>
</dbReference>
<dbReference type="EMBL" id="AL161585">
    <property type="protein sequence ID" value="CAB80183.1"/>
    <property type="status" value="ALT_SEQ"/>
    <property type="molecule type" value="Genomic_DNA"/>
</dbReference>
<dbReference type="EMBL" id="CP002687">
    <property type="protein sequence ID" value="AEE86405.1"/>
    <property type="molecule type" value="Genomic_DNA"/>
</dbReference>
<dbReference type="EMBL" id="CP002687">
    <property type="protein sequence ID" value="AEE86406.1"/>
    <property type="molecule type" value="Genomic_DNA"/>
</dbReference>
<dbReference type="EMBL" id="CP002687">
    <property type="protein sequence ID" value="AEE86407.1"/>
    <property type="molecule type" value="Genomic_DNA"/>
</dbReference>
<dbReference type="EMBL" id="AY072132">
    <property type="protein sequence ID" value="AAL59954.1"/>
    <property type="molecule type" value="mRNA"/>
</dbReference>
<dbReference type="EMBL" id="AY096478">
    <property type="protein sequence ID" value="AAM20118.1"/>
    <property type="molecule type" value="mRNA"/>
</dbReference>
<dbReference type="EMBL" id="AY087158">
    <property type="protein sequence ID" value="AAM64716.1"/>
    <property type="molecule type" value="mRNA"/>
</dbReference>
<dbReference type="PIR" id="T05286">
    <property type="entry name" value="T05286"/>
</dbReference>
<dbReference type="RefSeq" id="NP_001190913.1">
    <molecule id="Q8VWF1-2"/>
    <property type="nucleotide sequence ID" value="NM_001203984.1"/>
</dbReference>
<dbReference type="RefSeq" id="NP_001190914.1">
    <molecule id="Q8VWF1-3"/>
    <property type="nucleotide sequence ID" value="NM_001203985.1"/>
</dbReference>
<dbReference type="RefSeq" id="NP_567969.1">
    <molecule id="Q8VWF1-1"/>
    <property type="nucleotide sequence ID" value="NM_119632.4"/>
</dbReference>
<dbReference type="SMR" id="Q8VWF1"/>
<dbReference type="FunCoup" id="Q8VWF1">
    <property type="interactions" value="2596"/>
</dbReference>
<dbReference type="IntAct" id="Q8VWF1">
    <property type="interactions" value="2"/>
</dbReference>
<dbReference type="STRING" id="3702.Q8VWF1"/>
<dbReference type="GlyGen" id="Q8VWF1">
    <property type="glycosylation" value="1 site"/>
</dbReference>
<dbReference type="iPTMnet" id="Q8VWF1"/>
<dbReference type="PaxDb" id="3702-AT4G34660.1"/>
<dbReference type="ProteomicsDB" id="234501">
    <molecule id="Q8VWF1-1"/>
</dbReference>
<dbReference type="EnsemblPlants" id="AT4G34660.1">
    <molecule id="Q8VWF1-1"/>
    <property type="protein sequence ID" value="AT4G34660.1"/>
    <property type="gene ID" value="AT4G34660"/>
</dbReference>
<dbReference type="EnsemblPlants" id="AT4G34660.2">
    <molecule id="Q8VWF1-2"/>
    <property type="protein sequence ID" value="AT4G34660.2"/>
    <property type="gene ID" value="AT4G34660"/>
</dbReference>
<dbReference type="EnsemblPlants" id="AT4G34660.3">
    <molecule id="Q8VWF1-3"/>
    <property type="protein sequence ID" value="AT4G34660.3"/>
    <property type="gene ID" value="AT4G34660"/>
</dbReference>
<dbReference type="GeneID" id="829618"/>
<dbReference type="Gramene" id="AT4G34660.1">
    <molecule id="Q8VWF1-1"/>
    <property type="protein sequence ID" value="AT4G34660.1"/>
    <property type="gene ID" value="AT4G34660"/>
</dbReference>
<dbReference type="Gramene" id="AT4G34660.2">
    <molecule id="Q8VWF1-2"/>
    <property type="protein sequence ID" value="AT4G34660.2"/>
    <property type="gene ID" value="AT4G34660"/>
</dbReference>
<dbReference type="Gramene" id="AT4G34660.3">
    <molecule id="Q8VWF1-3"/>
    <property type="protein sequence ID" value="AT4G34660.3"/>
    <property type="gene ID" value="AT4G34660"/>
</dbReference>
<dbReference type="KEGG" id="ath:AT4G34660"/>
<dbReference type="Araport" id="AT4G34660"/>
<dbReference type="TAIR" id="AT4G34660">
    <property type="gene designation" value="SH3P2"/>
</dbReference>
<dbReference type="eggNOG" id="ENOG502QQJ7">
    <property type="taxonomic scope" value="Eukaryota"/>
</dbReference>
<dbReference type="InParanoid" id="Q8VWF1"/>
<dbReference type="OMA" id="MAYKLEA"/>
<dbReference type="OrthoDB" id="19092at2759"/>
<dbReference type="PhylomeDB" id="Q8VWF1"/>
<dbReference type="CD-CODE" id="4299E36E">
    <property type="entry name" value="Nucleolus"/>
</dbReference>
<dbReference type="PRO" id="PR:Q8VWF1"/>
<dbReference type="Proteomes" id="UP000006548">
    <property type="component" value="Chromosome 4"/>
</dbReference>
<dbReference type="ExpressionAtlas" id="Q8VWF1">
    <property type="expression patterns" value="baseline and differential"/>
</dbReference>
<dbReference type="GO" id="GO:0000421">
    <property type="term" value="C:autophagosome membrane"/>
    <property type="evidence" value="ECO:0007669"/>
    <property type="project" value="UniProtKB-SubCell"/>
</dbReference>
<dbReference type="GO" id="GO:0009504">
    <property type="term" value="C:cell plate"/>
    <property type="evidence" value="ECO:0000314"/>
    <property type="project" value="TAIR"/>
</dbReference>
<dbReference type="GO" id="GO:0030136">
    <property type="term" value="C:clathrin-coated vesicle"/>
    <property type="evidence" value="ECO:0007669"/>
    <property type="project" value="UniProtKB-SubCell"/>
</dbReference>
<dbReference type="GO" id="GO:0005829">
    <property type="term" value="C:cytosol"/>
    <property type="evidence" value="ECO:0000314"/>
    <property type="project" value="TAIR"/>
</dbReference>
<dbReference type="GO" id="GO:0005768">
    <property type="term" value="C:endosome"/>
    <property type="evidence" value="ECO:0000314"/>
    <property type="project" value="TAIR"/>
</dbReference>
<dbReference type="GO" id="GO:0005770">
    <property type="term" value="C:late endosome"/>
    <property type="evidence" value="ECO:0007669"/>
    <property type="project" value="UniProtKB-SubCell"/>
</dbReference>
<dbReference type="GO" id="GO:0005634">
    <property type="term" value="C:nucleus"/>
    <property type="evidence" value="ECO:0000314"/>
    <property type="project" value="TAIR"/>
</dbReference>
<dbReference type="GO" id="GO:0005886">
    <property type="term" value="C:plasma membrane"/>
    <property type="evidence" value="ECO:0000314"/>
    <property type="project" value="TAIR"/>
</dbReference>
<dbReference type="GO" id="GO:0005547">
    <property type="term" value="F:phosphatidylinositol-3,4,5-trisphosphate binding"/>
    <property type="evidence" value="ECO:0000314"/>
    <property type="project" value="UniProtKB"/>
</dbReference>
<dbReference type="GO" id="GO:0043325">
    <property type="term" value="F:phosphatidylinositol-3,4-bisphosphate binding"/>
    <property type="evidence" value="ECO:0000314"/>
    <property type="project" value="UniProtKB"/>
</dbReference>
<dbReference type="GO" id="GO:0032266">
    <property type="term" value="F:phosphatidylinositol-3-phosphate binding"/>
    <property type="evidence" value="ECO:0000314"/>
    <property type="project" value="UniProtKB"/>
</dbReference>
<dbReference type="GO" id="GO:0005546">
    <property type="term" value="F:phosphatidylinositol-4,5-bisphosphate binding"/>
    <property type="evidence" value="ECO:0000314"/>
    <property type="project" value="UniProtKB"/>
</dbReference>
<dbReference type="GO" id="GO:0043130">
    <property type="term" value="F:ubiquitin binding"/>
    <property type="evidence" value="ECO:0000314"/>
    <property type="project" value="TAIR"/>
</dbReference>
<dbReference type="GO" id="GO:0009920">
    <property type="term" value="P:cell plate formation involved in plant-type cell wall biogenesis"/>
    <property type="evidence" value="ECO:0000314"/>
    <property type="project" value="TAIR"/>
</dbReference>
<dbReference type="GO" id="GO:0072583">
    <property type="term" value="P:clathrin-dependent endocytosis"/>
    <property type="evidence" value="ECO:0000353"/>
    <property type="project" value="TAIR"/>
</dbReference>
<dbReference type="GO" id="GO:1903527">
    <property type="term" value="P:positive regulation of membrane tubulation"/>
    <property type="evidence" value="ECO:0000315"/>
    <property type="project" value="UniProtKB"/>
</dbReference>
<dbReference type="CDD" id="cd07607">
    <property type="entry name" value="BAR_SH3P_plant"/>
    <property type="match status" value="1"/>
</dbReference>
<dbReference type="FunFam" id="1.20.1270.60:FF:000077">
    <property type="entry name" value="SH3 domain-containing protein 1"/>
    <property type="match status" value="1"/>
</dbReference>
<dbReference type="Gene3D" id="1.20.1270.60">
    <property type="entry name" value="Arfaptin homology (AH) domain/BAR domain"/>
    <property type="match status" value="1"/>
</dbReference>
<dbReference type="Gene3D" id="2.30.30.40">
    <property type="entry name" value="SH3 Domains"/>
    <property type="match status" value="1"/>
</dbReference>
<dbReference type="InterPro" id="IPR027267">
    <property type="entry name" value="AH/BAR_dom_sf"/>
</dbReference>
<dbReference type="InterPro" id="IPR050384">
    <property type="entry name" value="Endophilin_SH3RF"/>
</dbReference>
<dbReference type="InterPro" id="IPR036028">
    <property type="entry name" value="SH3-like_dom_sf"/>
</dbReference>
<dbReference type="InterPro" id="IPR001452">
    <property type="entry name" value="SH3_domain"/>
</dbReference>
<dbReference type="PANTHER" id="PTHR14167:SF81">
    <property type="entry name" value="ENDOPHILIN-A"/>
    <property type="match status" value="1"/>
</dbReference>
<dbReference type="PANTHER" id="PTHR14167">
    <property type="entry name" value="SH3 DOMAIN-CONTAINING"/>
    <property type="match status" value="1"/>
</dbReference>
<dbReference type="Pfam" id="PF14604">
    <property type="entry name" value="SH3_9"/>
    <property type="match status" value="1"/>
</dbReference>
<dbReference type="SMART" id="SM00326">
    <property type="entry name" value="SH3"/>
    <property type="match status" value="1"/>
</dbReference>
<dbReference type="SUPFAM" id="SSF103657">
    <property type="entry name" value="BAR/IMD domain-like"/>
    <property type="match status" value="1"/>
</dbReference>
<dbReference type="SUPFAM" id="SSF50044">
    <property type="entry name" value="SH3-domain"/>
    <property type="match status" value="1"/>
</dbReference>
<dbReference type="PROSITE" id="PS50002">
    <property type="entry name" value="SH3"/>
    <property type="match status" value="1"/>
</dbReference>
<sequence length="368" mass="40925">MDAIRKQASRLREQVARQQQAVFKQFGGGGYGSGLADEAELNQHQKLEKLYISTRAAKHYQRDIVRGVEGYIVTGSKQVEIGTKLSEDSRKYGSENTCTNGNVLTRAALNYGRARAQMEKERGNMLKALGTQVAEPLRAMVLGAPLEDARHLAQRYDRMRQEAEAQATEVARRQAKARESQGNPDILMKLESAEAKLHDLKSNMTILGKEAASALASVEDQQQKLTLERLLSMVESERAYHQRVLQILDQLEGEMVSERQRIEAPSTPSSADSMPPPPSYEEANGVFASQMHDTSTDSMGYFLGEVLFPYHGVTDVELSLSTGEYVVVRKVTGSGWAEGECKGKAGWFPYGYIERRERVLASKVSEVF</sequence>
<protein>
    <recommendedName>
        <fullName evidence="11">SH3 domain-containing protein 2</fullName>
        <shortName evidence="11">AtSH3P2</shortName>
    </recommendedName>
</protein>
<name>SH3P2_ARATH</name>
<organism>
    <name type="scientific">Arabidopsis thaliana</name>
    <name type="common">Mouse-ear cress</name>
    <dbReference type="NCBI Taxonomy" id="3702"/>
    <lineage>
        <taxon>Eukaryota</taxon>
        <taxon>Viridiplantae</taxon>
        <taxon>Streptophyta</taxon>
        <taxon>Embryophyta</taxon>
        <taxon>Tracheophyta</taxon>
        <taxon>Spermatophyta</taxon>
        <taxon>Magnoliopsida</taxon>
        <taxon>eudicotyledons</taxon>
        <taxon>Gunneridae</taxon>
        <taxon>Pentapetalae</taxon>
        <taxon>rosids</taxon>
        <taxon>malvids</taxon>
        <taxon>Brassicales</taxon>
        <taxon>Brassicaceae</taxon>
        <taxon>Camelineae</taxon>
        <taxon>Arabidopsis</taxon>
    </lineage>
</organism>
<evidence type="ECO:0000255" key="1"/>
<evidence type="ECO:0000255" key="2">
    <source>
        <dbReference type="PROSITE-ProRule" id="PRU00192"/>
    </source>
</evidence>
<evidence type="ECO:0000255" key="3">
    <source>
        <dbReference type="PROSITE-ProRule" id="PRU00361"/>
    </source>
</evidence>
<evidence type="ECO:0000256" key="4">
    <source>
        <dbReference type="SAM" id="MobiDB-lite"/>
    </source>
</evidence>
<evidence type="ECO:0000269" key="5">
    <source>
    </source>
</evidence>
<evidence type="ECO:0000269" key="6">
    <source>
    </source>
</evidence>
<evidence type="ECO:0000269" key="7">
    <source>
    </source>
</evidence>
<evidence type="ECO:0000269" key="8">
    <source>
    </source>
</evidence>
<evidence type="ECO:0000269" key="9">
    <source>
    </source>
</evidence>
<evidence type="ECO:0000269" key="10">
    <source ref="9"/>
</evidence>
<evidence type="ECO:0000303" key="11">
    <source>
    </source>
</evidence>
<evidence type="ECO:0000305" key="12"/>
<evidence type="ECO:0000312" key="13">
    <source>
        <dbReference type="Araport" id="AT4G34660"/>
    </source>
</evidence>
<evidence type="ECO:0000312" key="14">
    <source>
        <dbReference type="EMBL" id="CAA18845.1"/>
    </source>
</evidence>
<proteinExistence type="evidence at protein level"/>
<feature type="chain" id="PRO_0000434151" description="SH3 domain-containing protein 2">
    <location>
        <begin position="1"/>
        <end position="368"/>
    </location>
</feature>
<feature type="domain" description="BAR" evidence="3">
    <location>
        <begin position="1"/>
        <end position="264"/>
    </location>
</feature>
<feature type="domain" description="SH3" evidence="2">
    <location>
        <begin position="299"/>
        <end position="358"/>
    </location>
</feature>
<feature type="region of interest" description="Disordered" evidence="4">
    <location>
        <begin position="258"/>
        <end position="281"/>
    </location>
</feature>
<feature type="coiled-coil region" evidence="1">
    <location>
        <begin position="1"/>
        <end position="21"/>
    </location>
</feature>
<feature type="coiled-coil region" evidence="1">
    <location>
        <begin position="146"/>
        <end position="210"/>
    </location>
</feature>
<feature type="splice variant" id="VSP_057911" description="In isoform 2.">
    <location>
        <begin position="20"/>
        <end position="42"/>
    </location>
</feature>
<feature type="splice variant" id="VSP_057912" description="In isoform 3.">
    <location>
        <begin position="253"/>
        <end position="303"/>
    </location>
</feature>
<feature type="mutagenesis site" description="Reduced binding to PtdIns(3,4,5)P(3)-containing vesicles and lower capacity to mediate the tubulation of liposomes. Impaired binding to PtdIns(3,4,5)P(3)-containing vesicles; when associated with E-155, E-160 and E-161. Strongly impaired binding to PtdIns(3,4,5)P(3)-containing vesicles; when associated with E-155, E-160, E-161, E-172, E-175 and E-189." evidence="9">
    <original>Q</original>
    <variation>E</variation>
    <location>
        <position position="154"/>
    </location>
</feature>
<feature type="mutagenesis site" description="Reduced binding to PtdIns(3,4,5)P(3)-containing vesicles and lower capacity to mediate the tubulation of liposomes. Impaired binding to PtdIns(3,4,5)P(3)-containing vesicles; when associated with E-154, E-160 and E-161. Strongly impaired binding to PtdIns(3,4,5)P(3)-containing vesicles; when associated with E-154, E-160, E-161, E-172, E-175 and E-189." evidence="9">
    <original>R</original>
    <variation>E</variation>
    <location>
        <position position="155"/>
    </location>
</feature>
<feature type="mutagenesis site" description="Reduced binding to PtdIns(3,4,5)P(3)-containing vesicles and lower capacity to mediate the tubulation of liposomes. Impaired binding to PtdIns(3,4,5)P(3)-containing vesicles; when associated with E-154 and E-155. Strongly impaired binding to PtdIns(3,4,5)P(3)-containing vesicles; when associated with E-154, E-155, E-160, E-172, E-175 and E-189." evidence="9">
    <original>RQ</original>
    <variation>EE</variation>
    <location>
        <begin position="160"/>
        <end position="161"/>
    </location>
</feature>
<feature type="mutagenesis site" description="Strongly impaired binding to PtdIns(3,4,5)P(3)-containing vesicles and lower capacity to mediate the tubulation of liposomes; when associated with E-154, E-155, E-160, E-161, E-173 and E-189." evidence="9">
    <original>R</original>
    <variation>E</variation>
    <location>
        <position position="172"/>
    </location>
</feature>
<feature type="mutagenesis site" description="Strongly impaired binding to PtdIns(3,4,5)P(3)-containing vesicles and lower capacity to mediate the tubulation of liposomes; when associated with E-154, E-155, E-160, E-161, E-172 and E-189." evidence="9">
    <original>R</original>
    <variation>E</variation>
    <location>
        <position position="173"/>
    </location>
</feature>
<feature type="mutagenesis site" description="Reduced binding to PtdIns(3,4,5)P(3)-containing vesicles and lower capacity to mediate the tubulation of liposomes. Strongly impaired binding to PtdIns(3,4,5)P(3)-containing vesicles; when associated with E-154, E-155, E-160, E-161, E-172 and E-173." evidence="9">
    <original>K</original>
    <variation>E</variation>
    <location>
        <position position="189"/>
    </location>
</feature>